<protein>
    <recommendedName>
        <fullName evidence="1">Mitochondrial distribution and morphology protein 10</fullName>
    </recommendedName>
    <alternativeName>
        <fullName evidence="1">Mitochondrial inheritance component MDM10</fullName>
    </alternativeName>
</protein>
<proteinExistence type="inferred from homology"/>
<keyword id="KW-0472">Membrane</keyword>
<keyword id="KW-0496">Mitochondrion</keyword>
<keyword id="KW-1000">Mitochondrion outer membrane</keyword>
<keyword id="KW-1185">Reference proteome</keyword>
<keyword id="KW-0812">Transmembrane</keyword>
<keyword id="KW-1134">Transmembrane beta strand</keyword>
<evidence type="ECO:0000255" key="1">
    <source>
        <dbReference type="HAMAP-Rule" id="MF_03102"/>
    </source>
</evidence>
<organism>
    <name type="scientific">Candida tropicalis (strain ATCC MYA-3404 / T1)</name>
    <name type="common">Yeast</name>
    <dbReference type="NCBI Taxonomy" id="294747"/>
    <lineage>
        <taxon>Eukaryota</taxon>
        <taxon>Fungi</taxon>
        <taxon>Dikarya</taxon>
        <taxon>Ascomycota</taxon>
        <taxon>Saccharomycotina</taxon>
        <taxon>Pichiomycetes</taxon>
        <taxon>Debaryomycetaceae</taxon>
        <taxon>Candida/Lodderomyces clade</taxon>
        <taxon>Candida</taxon>
    </lineage>
</organism>
<comment type="function">
    <text evidence="1">Component of the ERMES/MDM complex, which serves as a molecular tether to connect the endoplasmic reticulum and mitochondria. Components of this complex are involved in the control of mitochondrial shape and protein biogenesis and may function in phospholipid exchange. MDM10 is involved in the late assembly steps of the general translocase of the mitochondrial outer membrane (TOM complex). Functions in the TOM40-specific route of the assembly of outer membrane beta-barrel proteins, including the association of TOM40 with the receptor TOM22 and small TOM proteins. Can associate with the SAM(core) complex as well as the MDM12-MMM1 complex, both involved in late steps of the major beta-barrel assembly pathway, that is responsible for biogenesis of all outer membrane beta-barrel proteins. May act as a switch that shuttles between both complexes and channels precursor proteins into the TOM40-specific pathway. Plays a role in mitochondrial morphology and in the inheritance of mitochondria.</text>
</comment>
<comment type="subunit">
    <text evidence="1">Component of the ER-mitochondria encounter structure (ERMES) or MDM complex, composed of MMM1, MDM10, MDM12 and MDM34. Associates with the mitochondrial outer membrane sorting assembly machinery SAM(core) complex.</text>
</comment>
<comment type="subcellular location">
    <subcellularLocation>
        <location evidence="1">Mitochondrion outer membrane</location>
        <topology evidence="1">Multi-pass membrane protein</topology>
    </subcellularLocation>
    <text evidence="1">The ERMES/MDM complex localizes to a few discrete foci (around 10 per single cell), that represent mitochondria-endoplasmic reticulum junctions. These foci are often found next to mtDNA nucleoids.</text>
</comment>
<comment type="domain">
    <text>Lacks alpha-helical transmembrane segments, suggesting that it resides in the membrane via beta-sheet conformations similar to those predicted for other outer membrane proteins and porin.</text>
</comment>
<comment type="similarity">
    <text evidence="1">Belongs to the MDM10 family.</text>
</comment>
<sequence length="454" mass="51077">MYTYMEYLQKCFYKSTNWNEDNIFSNITATSQAILEFPIPNGFKIDSSSKTTDYSASSFTLSNNHQINGSLAYLYSSVPLKNTMGTKDVSLQDAIAGFRIIEPMVRLQPKFNNKAPHSKSSLLYGRMYFPGSALEAMIIKRISENTQLLIKCVNNPHLSKNGTMIVYLQNNTAKYSREFIYSTNESLIGLRCLYNLGTPTSSSTVSSFNPRTIPKFDNSVVSIGTELWFATRSMSPGLSGALRYSTRSTSTGKPLTMTLAINPILGHISSTYTVKTSVASTFCSRYDFNVFSYASNLSLGFELYSYANKKRSDFYNHEIYSSSEENKYLKQHPELQKHHRVPIRAYKHHDNRTIINPIHNLDNVYHINPTLLSTTSGSGHTSETVTTAFQNLVNESDFSSVLKFSTSLNDKVVKILWEGRLRDFLVSTGVKLSLNPVTNTPEFNKLGISFSYAL</sequence>
<accession>C5M6Z4</accession>
<gene>
    <name evidence="1" type="primary">MDM10</name>
    <name type="ORF">CTRG_01625</name>
</gene>
<dbReference type="EMBL" id="GG692396">
    <property type="protein sequence ID" value="EER34764.1"/>
    <property type="molecule type" value="Genomic_DNA"/>
</dbReference>
<dbReference type="RefSeq" id="XP_002547319.1">
    <property type="nucleotide sequence ID" value="XM_002547273.1"/>
</dbReference>
<dbReference type="SMR" id="C5M6Z4"/>
<dbReference type="STRING" id="294747.C5M6Z4"/>
<dbReference type="EnsemblFungi" id="CTRG_01625-t43_1">
    <property type="protein sequence ID" value="CTRG_01625-t43_1-p1"/>
    <property type="gene ID" value="CTRG_01625"/>
</dbReference>
<dbReference type="GeneID" id="8301275"/>
<dbReference type="KEGG" id="ctp:CTRG_01625"/>
<dbReference type="VEuPathDB" id="FungiDB:CTRG_01625"/>
<dbReference type="eggNOG" id="ENOG502QUN5">
    <property type="taxonomic scope" value="Eukaryota"/>
</dbReference>
<dbReference type="HOGENOM" id="CLU_026505_0_0_1"/>
<dbReference type="OrthoDB" id="2103793at2759"/>
<dbReference type="Proteomes" id="UP000002037">
    <property type="component" value="Unassembled WGS sequence"/>
</dbReference>
<dbReference type="GO" id="GO:0032865">
    <property type="term" value="C:ERMES complex"/>
    <property type="evidence" value="ECO:0007669"/>
    <property type="project" value="UniProtKB-UniRule"/>
</dbReference>
<dbReference type="GO" id="GO:0001401">
    <property type="term" value="C:SAM complex"/>
    <property type="evidence" value="ECO:0007669"/>
    <property type="project" value="TreeGrafter"/>
</dbReference>
<dbReference type="GO" id="GO:0051654">
    <property type="term" value="P:establishment of mitochondrion localization"/>
    <property type="evidence" value="ECO:0007669"/>
    <property type="project" value="TreeGrafter"/>
</dbReference>
<dbReference type="GO" id="GO:0000002">
    <property type="term" value="P:mitochondrial genome maintenance"/>
    <property type="evidence" value="ECO:0007669"/>
    <property type="project" value="UniProtKB-UniRule"/>
</dbReference>
<dbReference type="GO" id="GO:0070096">
    <property type="term" value="P:mitochondrial outer membrane translocase complex assembly"/>
    <property type="evidence" value="ECO:0007669"/>
    <property type="project" value="UniProtKB-UniRule"/>
</dbReference>
<dbReference type="GO" id="GO:1990456">
    <property type="term" value="P:mitochondrion-endoplasmic reticulum membrane tethering"/>
    <property type="evidence" value="ECO:0007669"/>
    <property type="project" value="UniProtKB-UniRule"/>
</dbReference>
<dbReference type="GO" id="GO:0015914">
    <property type="term" value="P:phospholipid transport"/>
    <property type="evidence" value="ECO:0007669"/>
    <property type="project" value="TreeGrafter"/>
</dbReference>
<dbReference type="GO" id="GO:0045040">
    <property type="term" value="P:protein insertion into mitochondrial outer membrane"/>
    <property type="evidence" value="ECO:0007669"/>
    <property type="project" value="UniProtKB-UniRule"/>
</dbReference>
<dbReference type="HAMAP" id="MF_03102">
    <property type="entry name" value="Mdm10"/>
    <property type="match status" value="1"/>
</dbReference>
<dbReference type="InterPro" id="IPR027539">
    <property type="entry name" value="Mdm10"/>
</dbReference>
<dbReference type="PANTHER" id="PTHR28035">
    <property type="entry name" value="MITOCHONDRIAL DISTRIBUTION AND MORPHOLOGY PROTEIN 10"/>
    <property type="match status" value="1"/>
</dbReference>
<dbReference type="PANTHER" id="PTHR28035:SF1">
    <property type="entry name" value="MITOCHONDRIAL DISTRIBUTION AND MORPHOLOGY PROTEIN 10"/>
    <property type="match status" value="1"/>
</dbReference>
<dbReference type="Pfam" id="PF12519">
    <property type="entry name" value="MDM10"/>
    <property type="match status" value="1"/>
</dbReference>
<name>MDM10_CANTT</name>
<feature type="chain" id="PRO_0000384172" description="Mitochondrial distribution and morphology protein 10">
    <location>
        <begin position="1"/>
        <end position="454"/>
    </location>
</feature>
<reference key="1">
    <citation type="journal article" date="2009" name="Nature">
        <title>Evolution of pathogenicity and sexual reproduction in eight Candida genomes.</title>
        <authorList>
            <person name="Butler G."/>
            <person name="Rasmussen M.D."/>
            <person name="Lin M.F."/>
            <person name="Santos M.A.S."/>
            <person name="Sakthikumar S."/>
            <person name="Munro C.A."/>
            <person name="Rheinbay E."/>
            <person name="Grabherr M."/>
            <person name="Forche A."/>
            <person name="Reedy J.L."/>
            <person name="Agrafioti I."/>
            <person name="Arnaud M.B."/>
            <person name="Bates S."/>
            <person name="Brown A.J.P."/>
            <person name="Brunke S."/>
            <person name="Costanzo M.C."/>
            <person name="Fitzpatrick D.A."/>
            <person name="de Groot P.W.J."/>
            <person name="Harris D."/>
            <person name="Hoyer L.L."/>
            <person name="Hube B."/>
            <person name="Klis F.M."/>
            <person name="Kodira C."/>
            <person name="Lennard N."/>
            <person name="Logue M.E."/>
            <person name="Martin R."/>
            <person name="Neiman A.M."/>
            <person name="Nikolaou E."/>
            <person name="Quail M.A."/>
            <person name="Quinn J."/>
            <person name="Santos M.C."/>
            <person name="Schmitzberger F.F."/>
            <person name="Sherlock G."/>
            <person name="Shah P."/>
            <person name="Silverstein K.A.T."/>
            <person name="Skrzypek M.S."/>
            <person name="Soll D."/>
            <person name="Staggs R."/>
            <person name="Stansfield I."/>
            <person name="Stumpf M.P.H."/>
            <person name="Sudbery P.E."/>
            <person name="Srikantha T."/>
            <person name="Zeng Q."/>
            <person name="Berman J."/>
            <person name="Berriman M."/>
            <person name="Heitman J."/>
            <person name="Gow N.A.R."/>
            <person name="Lorenz M.C."/>
            <person name="Birren B.W."/>
            <person name="Kellis M."/>
            <person name="Cuomo C.A."/>
        </authorList>
    </citation>
    <scope>NUCLEOTIDE SEQUENCE [LARGE SCALE GENOMIC DNA]</scope>
    <source>
        <strain>ATCC MYA-3404 / T1</strain>
    </source>
</reference>